<organism>
    <name type="scientific">Streptomyces exfoliatus</name>
    <name type="common">Streptomyces hydrogenans</name>
    <dbReference type="NCBI Taxonomy" id="1905"/>
    <lineage>
        <taxon>Bacteria</taxon>
        <taxon>Bacillati</taxon>
        <taxon>Actinomycetota</taxon>
        <taxon>Actinomycetes</taxon>
        <taxon>Kitasatosporales</taxon>
        <taxon>Streptomycetaceae</taxon>
        <taxon>Streptomyces</taxon>
    </lineage>
</organism>
<feature type="chain" id="PRO_0000421998" description="1-deoxy-11-beta-hydroxypentalenate dehydrogenase">
    <location>
        <begin position="1"/>
        <end position="275"/>
    </location>
</feature>
<feature type="active site" description="Proton acceptor" evidence="2">
    <location>
        <position position="157"/>
    </location>
</feature>
<feature type="binding site" evidence="1">
    <location>
        <begin position="12"/>
        <end position="36"/>
    </location>
    <ligand>
        <name>NAD(+)</name>
        <dbReference type="ChEBI" id="CHEBI:57540"/>
    </ligand>
</feature>
<feature type="binding site" evidence="1">
    <location>
        <position position="144"/>
    </location>
    <ligand>
        <name>substrate</name>
    </ligand>
</feature>
<feature type="binding site" evidence="1">
    <location>
        <position position="161"/>
    </location>
    <ligand>
        <name>NAD(+)</name>
        <dbReference type="ChEBI" id="CHEBI:57540"/>
    </ligand>
</feature>
<name>PENF_STREX</name>
<keyword id="KW-0045">Antibiotic biosynthesis</keyword>
<keyword id="KW-0520">NAD</keyword>
<keyword id="KW-0560">Oxidoreductase</keyword>
<sequence length="275" mass="29203">MHLQTRAAVVTGAASGIGLALSARFARAGAGVVMADVDGDALHRRAAELTARGAQVTAVTADLTDPEVVERLADTAFDQLGDIDVVCNNAGVLGPVGQPLWEVPLERMRQVFEVNHWAHVLVARAFVPRLLERGRPAHLIHTASMSAFVVGAGSAAYAASKHADLAVARSLRADLRGTGVRVSVLCPGRVDTPMVQGLTAPRGAGGDTSVSAEDVAGLVWEALGSDRFYLFSNSDARIRLRDQFDDVWRHVSLPPPSPEEELWPAPKATTVTMNH</sequence>
<proteinExistence type="inferred from homology"/>
<gene>
    <name type="primary">penF</name>
</gene>
<protein>
    <recommendedName>
        <fullName>1-deoxy-11-beta-hydroxypentalenate dehydrogenase</fullName>
        <ecNumber>1.1.1.340</ecNumber>
    </recommendedName>
    <alternativeName>
        <fullName>Pentalenolactone biosynthesis protein F</fullName>
    </alternativeName>
</protein>
<dbReference type="EC" id="1.1.1.340"/>
<dbReference type="EMBL" id="HQ292066">
    <property type="protein sequence ID" value="ADO85590.1"/>
    <property type="molecule type" value="Genomic_DNA"/>
</dbReference>
<dbReference type="SMR" id="E3VWK2"/>
<dbReference type="BioCyc" id="MetaCyc:MONOMER-16848"/>
<dbReference type="UniPathway" id="UPA00974"/>
<dbReference type="GO" id="GO:0016491">
    <property type="term" value="F:oxidoreductase activity"/>
    <property type="evidence" value="ECO:0007669"/>
    <property type="project" value="UniProtKB-KW"/>
</dbReference>
<dbReference type="GO" id="GO:0017000">
    <property type="term" value="P:antibiotic biosynthetic process"/>
    <property type="evidence" value="ECO:0007669"/>
    <property type="project" value="UniProtKB-KW"/>
</dbReference>
<dbReference type="CDD" id="cd05233">
    <property type="entry name" value="SDR_c"/>
    <property type="match status" value="1"/>
</dbReference>
<dbReference type="Gene3D" id="3.40.50.720">
    <property type="entry name" value="NAD(P)-binding Rossmann-like Domain"/>
    <property type="match status" value="1"/>
</dbReference>
<dbReference type="InterPro" id="IPR054968">
    <property type="entry name" value="HdxpentlteDhPtlF"/>
</dbReference>
<dbReference type="InterPro" id="IPR036291">
    <property type="entry name" value="NAD(P)-bd_dom_sf"/>
</dbReference>
<dbReference type="InterPro" id="IPR020904">
    <property type="entry name" value="Sc_DH/Rdtase_CS"/>
</dbReference>
<dbReference type="InterPro" id="IPR002347">
    <property type="entry name" value="SDR_fam"/>
</dbReference>
<dbReference type="NCBIfam" id="NF045814">
    <property type="entry name" value="HdxpentlteDhPtlF"/>
    <property type="match status" value="1"/>
</dbReference>
<dbReference type="PANTHER" id="PTHR43669">
    <property type="entry name" value="5-KETO-D-GLUCONATE 5-REDUCTASE"/>
    <property type="match status" value="1"/>
</dbReference>
<dbReference type="PANTHER" id="PTHR43669:SF3">
    <property type="entry name" value="ALCOHOL DEHYDROGENASE, PUTATIVE (AFU_ORTHOLOGUE AFUA_3G03445)-RELATED"/>
    <property type="match status" value="1"/>
</dbReference>
<dbReference type="Pfam" id="PF00106">
    <property type="entry name" value="adh_short"/>
    <property type="match status" value="1"/>
</dbReference>
<dbReference type="PRINTS" id="PR00081">
    <property type="entry name" value="GDHRDH"/>
</dbReference>
<dbReference type="PRINTS" id="PR00080">
    <property type="entry name" value="SDRFAMILY"/>
</dbReference>
<dbReference type="SMART" id="SM00822">
    <property type="entry name" value="PKS_KR"/>
    <property type="match status" value="1"/>
</dbReference>
<dbReference type="SUPFAM" id="SSF51735">
    <property type="entry name" value="NAD(P)-binding Rossmann-fold domains"/>
    <property type="match status" value="1"/>
</dbReference>
<dbReference type="PROSITE" id="PS00061">
    <property type="entry name" value="ADH_SHORT"/>
    <property type="match status" value="1"/>
</dbReference>
<comment type="function">
    <text evidence="1">Catalyzes the oxidation of 1-deoxy-11-beta-hydroxypentalenic acid to 1-deoxy-11-oxopentalenic acid in the biosynthesis of pentalenolactone antibiotic.</text>
</comment>
<comment type="catalytic activity">
    <reaction>
        <text>1-deoxy-11beta-hydroxypentalenate + NAD(+) = 1-deoxy-11-oxopentalenate + NADH + H(+)</text>
        <dbReference type="Rhea" id="RHEA:34559"/>
        <dbReference type="ChEBI" id="CHEBI:15378"/>
        <dbReference type="ChEBI" id="CHEBI:57540"/>
        <dbReference type="ChEBI" id="CHEBI:57945"/>
        <dbReference type="ChEBI" id="CHEBI:70779"/>
        <dbReference type="ChEBI" id="CHEBI:70780"/>
        <dbReference type="EC" id="1.1.1.340"/>
    </reaction>
</comment>
<comment type="pathway">
    <text>Antibiotic biosynthesis; pentalenolactone biosynthesis.</text>
</comment>
<comment type="similarity">
    <text evidence="3">Belongs to the short-chain dehydrogenases/reductases (SDR) family.</text>
</comment>
<accession>E3VWK2</accession>
<reference key="1">
    <citation type="journal article" date="2011" name="J. Am. Chem. Soc.">
        <title>Genome mining in streptomyces. Discovery of an unprecedented P450-catalyzed oxidative rearrangement that is the final step in the biosynthesis of pentalenolactone.</title>
        <authorList>
            <person name="Zhu D."/>
            <person name="Seo M.J."/>
            <person name="Ikeda H."/>
            <person name="Cane D.E."/>
        </authorList>
    </citation>
    <scope>NUCLEOTIDE SEQUENCE [GENOMIC DNA]</scope>
    <source>
        <strain>UC5319</strain>
    </source>
</reference>
<evidence type="ECO:0000250" key="1"/>
<evidence type="ECO:0000255" key="2">
    <source>
        <dbReference type="PROSITE-ProRule" id="PRU10001"/>
    </source>
</evidence>
<evidence type="ECO:0000305" key="3"/>